<keyword id="KW-0687">Ribonucleoprotein</keyword>
<keyword id="KW-0689">Ribosomal protein</keyword>
<sequence length="131" mass="15050">MRHRHGLRKLNRTSSHRLAMLRNMSNSLIEHEVIKTTLPKAKELRKVVEPLITLGKKPSLANRRLAFNRLRDRDSVAKLFDVLGPRFANRPGGYLRVLKFGFRVGDNAPMALVELLDRPEVDETENVQEAE</sequence>
<dbReference type="EMBL" id="CP001025">
    <property type="protein sequence ID" value="ACB62804.1"/>
    <property type="molecule type" value="Genomic_DNA"/>
</dbReference>
<dbReference type="RefSeq" id="WP_006477175.1">
    <property type="nucleotide sequence ID" value="NC_010551.1"/>
</dbReference>
<dbReference type="SMR" id="B1YRQ6"/>
<dbReference type="GeneID" id="98107133"/>
<dbReference type="KEGG" id="bac:BamMC406_0303"/>
<dbReference type="HOGENOM" id="CLU_074407_2_0_4"/>
<dbReference type="OrthoDB" id="9809073at2"/>
<dbReference type="Proteomes" id="UP000001680">
    <property type="component" value="Chromosome 1"/>
</dbReference>
<dbReference type="GO" id="GO:0022625">
    <property type="term" value="C:cytosolic large ribosomal subunit"/>
    <property type="evidence" value="ECO:0007669"/>
    <property type="project" value="TreeGrafter"/>
</dbReference>
<dbReference type="GO" id="GO:0003735">
    <property type="term" value="F:structural constituent of ribosome"/>
    <property type="evidence" value="ECO:0007669"/>
    <property type="project" value="InterPro"/>
</dbReference>
<dbReference type="GO" id="GO:0006412">
    <property type="term" value="P:translation"/>
    <property type="evidence" value="ECO:0007669"/>
    <property type="project" value="UniProtKB-UniRule"/>
</dbReference>
<dbReference type="FunFam" id="3.90.1030.10:FF:000001">
    <property type="entry name" value="50S ribosomal protein L17"/>
    <property type="match status" value="1"/>
</dbReference>
<dbReference type="Gene3D" id="3.90.1030.10">
    <property type="entry name" value="Ribosomal protein L17"/>
    <property type="match status" value="1"/>
</dbReference>
<dbReference type="HAMAP" id="MF_01368">
    <property type="entry name" value="Ribosomal_bL17"/>
    <property type="match status" value="1"/>
</dbReference>
<dbReference type="InterPro" id="IPR000456">
    <property type="entry name" value="Ribosomal_bL17"/>
</dbReference>
<dbReference type="InterPro" id="IPR047859">
    <property type="entry name" value="Ribosomal_bL17_CS"/>
</dbReference>
<dbReference type="InterPro" id="IPR036373">
    <property type="entry name" value="Ribosomal_bL17_sf"/>
</dbReference>
<dbReference type="NCBIfam" id="TIGR00059">
    <property type="entry name" value="L17"/>
    <property type="match status" value="1"/>
</dbReference>
<dbReference type="PANTHER" id="PTHR14413:SF16">
    <property type="entry name" value="LARGE RIBOSOMAL SUBUNIT PROTEIN BL17M"/>
    <property type="match status" value="1"/>
</dbReference>
<dbReference type="PANTHER" id="PTHR14413">
    <property type="entry name" value="RIBOSOMAL PROTEIN L17"/>
    <property type="match status" value="1"/>
</dbReference>
<dbReference type="Pfam" id="PF01196">
    <property type="entry name" value="Ribosomal_L17"/>
    <property type="match status" value="1"/>
</dbReference>
<dbReference type="SUPFAM" id="SSF64263">
    <property type="entry name" value="Prokaryotic ribosomal protein L17"/>
    <property type="match status" value="1"/>
</dbReference>
<dbReference type="PROSITE" id="PS01167">
    <property type="entry name" value="RIBOSOMAL_L17"/>
    <property type="match status" value="1"/>
</dbReference>
<proteinExistence type="inferred from homology"/>
<protein>
    <recommendedName>
        <fullName evidence="1">Large ribosomal subunit protein bL17</fullName>
    </recommendedName>
    <alternativeName>
        <fullName evidence="2">50S ribosomal protein L17</fullName>
    </alternativeName>
</protein>
<evidence type="ECO:0000255" key="1">
    <source>
        <dbReference type="HAMAP-Rule" id="MF_01368"/>
    </source>
</evidence>
<evidence type="ECO:0000305" key="2"/>
<name>RL17_BURA4</name>
<accession>B1YRQ6</accession>
<reference key="1">
    <citation type="submission" date="2008-04" db="EMBL/GenBank/DDBJ databases">
        <title>Complete sequence of chromosome 1 of Burkholderia ambifaria MC40-6.</title>
        <authorList>
            <person name="Copeland A."/>
            <person name="Lucas S."/>
            <person name="Lapidus A."/>
            <person name="Glavina del Rio T."/>
            <person name="Dalin E."/>
            <person name="Tice H."/>
            <person name="Pitluck S."/>
            <person name="Chain P."/>
            <person name="Malfatti S."/>
            <person name="Shin M."/>
            <person name="Vergez L."/>
            <person name="Lang D."/>
            <person name="Schmutz J."/>
            <person name="Larimer F."/>
            <person name="Land M."/>
            <person name="Hauser L."/>
            <person name="Kyrpides N."/>
            <person name="Lykidis A."/>
            <person name="Ramette A."/>
            <person name="Konstantinidis K."/>
            <person name="Tiedje J."/>
            <person name="Richardson P."/>
        </authorList>
    </citation>
    <scope>NUCLEOTIDE SEQUENCE [LARGE SCALE GENOMIC DNA]</scope>
    <source>
        <strain>MC40-6</strain>
    </source>
</reference>
<organism>
    <name type="scientific">Burkholderia ambifaria (strain MC40-6)</name>
    <dbReference type="NCBI Taxonomy" id="398577"/>
    <lineage>
        <taxon>Bacteria</taxon>
        <taxon>Pseudomonadati</taxon>
        <taxon>Pseudomonadota</taxon>
        <taxon>Betaproteobacteria</taxon>
        <taxon>Burkholderiales</taxon>
        <taxon>Burkholderiaceae</taxon>
        <taxon>Burkholderia</taxon>
        <taxon>Burkholderia cepacia complex</taxon>
    </lineage>
</organism>
<comment type="subunit">
    <text evidence="1">Part of the 50S ribosomal subunit. Contacts protein L32.</text>
</comment>
<comment type="similarity">
    <text evidence="1">Belongs to the bacterial ribosomal protein bL17 family.</text>
</comment>
<feature type="chain" id="PRO_1000144387" description="Large ribosomal subunit protein bL17">
    <location>
        <begin position="1"/>
        <end position="131"/>
    </location>
</feature>
<gene>
    <name evidence="1" type="primary">rplQ</name>
    <name type="ordered locus">BamMC406_0303</name>
</gene>